<reference key="1">
    <citation type="journal article" date="2009" name="PLoS ONE">
        <title>Salmonella paratyphi C: genetic divergence from Salmonella choleraesuis and pathogenic convergence with Salmonella typhi.</title>
        <authorList>
            <person name="Liu W.-Q."/>
            <person name="Feng Y."/>
            <person name="Wang Y."/>
            <person name="Zou Q.-H."/>
            <person name="Chen F."/>
            <person name="Guo J.-T."/>
            <person name="Peng Y.-H."/>
            <person name="Jin Y."/>
            <person name="Li Y.-G."/>
            <person name="Hu S.-N."/>
            <person name="Johnston R.N."/>
            <person name="Liu G.-R."/>
            <person name="Liu S.-L."/>
        </authorList>
    </citation>
    <scope>NUCLEOTIDE SEQUENCE [LARGE SCALE GENOMIC DNA]</scope>
    <source>
        <strain>RKS4594</strain>
    </source>
</reference>
<gene>
    <name evidence="1" type="primary">dut</name>
    <name type="ordered locus">SPC_3813</name>
</gene>
<feature type="chain" id="PRO_1000119246" description="Deoxyuridine 5'-triphosphate nucleotidohydrolase">
    <location>
        <begin position="1"/>
        <end position="152"/>
    </location>
</feature>
<feature type="binding site" evidence="1">
    <location>
        <begin position="71"/>
        <end position="73"/>
    </location>
    <ligand>
        <name>substrate</name>
    </ligand>
</feature>
<feature type="binding site" evidence="1">
    <location>
        <position position="84"/>
    </location>
    <ligand>
        <name>substrate</name>
    </ligand>
</feature>
<feature type="binding site" evidence="1">
    <location>
        <begin position="88"/>
        <end position="90"/>
    </location>
    <ligand>
        <name>substrate</name>
    </ligand>
</feature>
<feature type="binding site" evidence="1">
    <location>
        <position position="98"/>
    </location>
    <ligand>
        <name>substrate</name>
    </ligand>
</feature>
<comment type="function">
    <text evidence="1">This enzyme is involved in nucleotide metabolism: it produces dUMP, the immediate precursor of thymidine nucleotides and it decreases the intracellular concentration of dUTP so that uracil cannot be incorporated into DNA.</text>
</comment>
<comment type="catalytic activity">
    <reaction evidence="1">
        <text>dUTP + H2O = dUMP + diphosphate + H(+)</text>
        <dbReference type="Rhea" id="RHEA:10248"/>
        <dbReference type="ChEBI" id="CHEBI:15377"/>
        <dbReference type="ChEBI" id="CHEBI:15378"/>
        <dbReference type="ChEBI" id="CHEBI:33019"/>
        <dbReference type="ChEBI" id="CHEBI:61555"/>
        <dbReference type="ChEBI" id="CHEBI:246422"/>
        <dbReference type="EC" id="3.6.1.23"/>
    </reaction>
</comment>
<comment type="cofactor">
    <cofactor evidence="1">
        <name>Mg(2+)</name>
        <dbReference type="ChEBI" id="CHEBI:18420"/>
    </cofactor>
</comment>
<comment type="pathway">
    <text evidence="1">Pyrimidine metabolism; dUMP biosynthesis; dUMP from dCTP (dUTP route): step 2/2.</text>
</comment>
<comment type="similarity">
    <text evidence="1">Belongs to the dUTPase family.</text>
</comment>
<keyword id="KW-0378">Hydrolase</keyword>
<keyword id="KW-0460">Magnesium</keyword>
<keyword id="KW-0479">Metal-binding</keyword>
<keyword id="KW-0546">Nucleotide metabolism</keyword>
<dbReference type="EC" id="3.6.1.23" evidence="1"/>
<dbReference type="EMBL" id="CP000857">
    <property type="protein sequence ID" value="ACN47888.1"/>
    <property type="molecule type" value="Genomic_DNA"/>
</dbReference>
<dbReference type="RefSeq" id="WP_000976078.1">
    <property type="nucleotide sequence ID" value="NC_012125.1"/>
</dbReference>
<dbReference type="SMR" id="C0Q1X2"/>
<dbReference type="KEGG" id="sei:SPC_3813"/>
<dbReference type="HOGENOM" id="CLU_068508_1_1_6"/>
<dbReference type="UniPathway" id="UPA00610">
    <property type="reaction ID" value="UER00666"/>
</dbReference>
<dbReference type="Proteomes" id="UP000001599">
    <property type="component" value="Chromosome"/>
</dbReference>
<dbReference type="GO" id="GO:0004170">
    <property type="term" value="F:dUTP diphosphatase activity"/>
    <property type="evidence" value="ECO:0007669"/>
    <property type="project" value="UniProtKB-UniRule"/>
</dbReference>
<dbReference type="GO" id="GO:0000287">
    <property type="term" value="F:magnesium ion binding"/>
    <property type="evidence" value="ECO:0007669"/>
    <property type="project" value="UniProtKB-UniRule"/>
</dbReference>
<dbReference type="GO" id="GO:0006226">
    <property type="term" value="P:dUMP biosynthetic process"/>
    <property type="evidence" value="ECO:0007669"/>
    <property type="project" value="UniProtKB-UniRule"/>
</dbReference>
<dbReference type="GO" id="GO:0046081">
    <property type="term" value="P:dUTP catabolic process"/>
    <property type="evidence" value="ECO:0007669"/>
    <property type="project" value="InterPro"/>
</dbReference>
<dbReference type="CDD" id="cd07557">
    <property type="entry name" value="trimeric_dUTPase"/>
    <property type="match status" value="1"/>
</dbReference>
<dbReference type="FunFam" id="2.70.40.10:FF:000002">
    <property type="entry name" value="dUTP diphosphatase"/>
    <property type="match status" value="1"/>
</dbReference>
<dbReference type="Gene3D" id="2.70.40.10">
    <property type="match status" value="1"/>
</dbReference>
<dbReference type="HAMAP" id="MF_00116">
    <property type="entry name" value="dUTPase_bact"/>
    <property type="match status" value="1"/>
</dbReference>
<dbReference type="InterPro" id="IPR008181">
    <property type="entry name" value="dUTPase"/>
</dbReference>
<dbReference type="InterPro" id="IPR029054">
    <property type="entry name" value="dUTPase-like"/>
</dbReference>
<dbReference type="InterPro" id="IPR036157">
    <property type="entry name" value="dUTPase-like_sf"/>
</dbReference>
<dbReference type="InterPro" id="IPR033704">
    <property type="entry name" value="dUTPase_trimeric"/>
</dbReference>
<dbReference type="NCBIfam" id="TIGR00576">
    <property type="entry name" value="dut"/>
    <property type="match status" value="1"/>
</dbReference>
<dbReference type="NCBIfam" id="NF001862">
    <property type="entry name" value="PRK00601.1"/>
    <property type="match status" value="1"/>
</dbReference>
<dbReference type="PANTHER" id="PTHR11241">
    <property type="entry name" value="DEOXYURIDINE 5'-TRIPHOSPHATE NUCLEOTIDOHYDROLASE"/>
    <property type="match status" value="1"/>
</dbReference>
<dbReference type="PANTHER" id="PTHR11241:SF0">
    <property type="entry name" value="DEOXYURIDINE 5'-TRIPHOSPHATE NUCLEOTIDOHYDROLASE"/>
    <property type="match status" value="1"/>
</dbReference>
<dbReference type="Pfam" id="PF00692">
    <property type="entry name" value="dUTPase"/>
    <property type="match status" value="1"/>
</dbReference>
<dbReference type="SUPFAM" id="SSF51283">
    <property type="entry name" value="dUTPase-like"/>
    <property type="match status" value="1"/>
</dbReference>
<sequence>MMKKIDVKILDPRVGQQFPLPTYATSGSAGLDLRACLDDAVELAPGATTLVPTGLAIHIADPSLAAVMLPRSGLGHKHGIVLGNLVGLIDSDYQGQLMVSIWNRGQDSFTIEPGERIAQMVFVPVVQAEFNLVEAFDATERGEGGFGHSGRK</sequence>
<protein>
    <recommendedName>
        <fullName evidence="1">Deoxyuridine 5'-triphosphate nucleotidohydrolase</fullName>
        <shortName evidence="1">dUTPase</shortName>
        <ecNumber evidence="1">3.6.1.23</ecNumber>
    </recommendedName>
    <alternativeName>
        <fullName evidence="1">dUTP pyrophosphatase</fullName>
    </alternativeName>
</protein>
<name>DUT_SALPC</name>
<organism>
    <name type="scientific">Salmonella paratyphi C (strain RKS4594)</name>
    <dbReference type="NCBI Taxonomy" id="476213"/>
    <lineage>
        <taxon>Bacteria</taxon>
        <taxon>Pseudomonadati</taxon>
        <taxon>Pseudomonadota</taxon>
        <taxon>Gammaproteobacteria</taxon>
        <taxon>Enterobacterales</taxon>
        <taxon>Enterobacteriaceae</taxon>
        <taxon>Salmonella</taxon>
    </lineage>
</organism>
<evidence type="ECO:0000255" key="1">
    <source>
        <dbReference type="HAMAP-Rule" id="MF_00116"/>
    </source>
</evidence>
<accession>C0Q1X2</accession>
<proteinExistence type="inferred from homology"/>